<comment type="cofactor">
    <cofactor evidence="1">
        <name>Zn(2+)</name>
        <dbReference type="ChEBI" id="CHEBI:29105"/>
    </cofactor>
    <text evidence="1">Binds 2 Zn(2+) ions per subunit.</text>
</comment>
<comment type="similarity">
    <text evidence="3">Belongs to the metallo-beta-lactamase superfamily.</text>
</comment>
<protein>
    <recommendedName>
        <fullName>Probable metallo-hydrolase Mb2322c</fullName>
        <ecNumber>3.-.-.-</ecNumber>
    </recommendedName>
</protein>
<sequence>MVATRGRPCPTNFSRPQRPRVAGNGTKSQRCRGRLTTSMLGVAPEAKGPPVKVHHLNCGTMNAFGIALLCHVLLVETDDGLVLVDTGFGIQDCLDPGRVGLFRHVLRPAFLQAETAARQIEQLGYRTSDVRHIVLTHFDFDHIGGIADFPEAHLHVTAAEARGAIHAPSLRERLRYRRGQWAHGPKLVEHGPDGEPWRGFASAKPLDSIGTGVVLVPMPGHTRGHAAVAVDAGHRWVLHCGDAFYHRGTLDGRFRVPFVMRAEEKLLSYNRNQLRDNQARIVELHRRHDPDLLIVCAHDPDLYQLARDTA</sequence>
<dbReference type="EC" id="3.-.-.-"/>
<dbReference type="EMBL" id="LT708304">
    <property type="protein sequence ID" value="SIU00934.1"/>
    <property type="molecule type" value="Genomic_DNA"/>
</dbReference>
<dbReference type="RefSeq" id="NP_855971.1">
    <property type="nucleotide sequence ID" value="NC_002945.3"/>
</dbReference>
<dbReference type="SMR" id="P64982"/>
<dbReference type="KEGG" id="mbo:BQ2027_MB2322C"/>
<dbReference type="PATRIC" id="fig|233413.5.peg.2546"/>
<dbReference type="Proteomes" id="UP000001419">
    <property type="component" value="Chromosome"/>
</dbReference>
<dbReference type="GO" id="GO:0016787">
    <property type="term" value="F:hydrolase activity"/>
    <property type="evidence" value="ECO:0007669"/>
    <property type="project" value="UniProtKB-KW"/>
</dbReference>
<dbReference type="GO" id="GO:0046872">
    <property type="term" value="F:metal ion binding"/>
    <property type="evidence" value="ECO:0007669"/>
    <property type="project" value="UniProtKB-KW"/>
</dbReference>
<dbReference type="CDD" id="cd07742">
    <property type="entry name" value="metallo-hydrolase-like_MBL-fold"/>
    <property type="match status" value="1"/>
</dbReference>
<dbReference type="Gene3D" id="3.60.15.10">
    <property type="entry name" value="Ribonuclease Z/Hydroxyacylglutathione hydrolase-like"/>
    <property type="match status" value="1"/>
</dbReference>
<dbReference type="InterPro" id="IPR051013">
    <property type="entry name" value="MBL_superfamily_lactonases"/>
</dbReference>
<dbReference type="InterPro" id="IPR001279">
    <property type="entry name" value="Metallo-B-lactamas"/>
</dbReference>
<dbReference type="InterPro" id="IPR036866">
    <property type="entry name" value="RibonucZ/Hydroxyglut_hydro"/>
</dbReference>
<dbReference type="PANTHER" id="PTHR42978:SF7">
    <property type="entry name" value="METALLO-HYDROLASE RV2300C-RELATED"/>
    <property type="match status" value="1"/>
</dbReference>
<dbReference type="PANTHER" id="PTHR42978">
    <property type="entry name" value="QUORUM-QUENCHING LACTONASE YTNP-RELATED-RELATED"/>
    <property type="match status" value="1"/>
</dbReference>
<dbReference type="Pfam" id="PF00753">
    <property type="entry name" value="Lactamase_B"/>
    <property type="match status" value="1"/>
</dbReference>
<dbReference type="SMART" id="SM00849">
    <property type="entry name" value="Lactamase_B"/>
    <property type="match status" value="1"/>
</dbReference>
<dbReference type="SUPFAM" id="SSF56281">
    <property type="entry name" value="Metallo-hydrolase/oxidoreductase"/>
    <property type="match status" value="1"/>
</dbReference>
<accession>P64982</accession>
<accession>A0A1R3Y2Y7</accession>
<accession>Q50665</accession>
<accession>X2BK98</accession>
<name>Y2322_MYCBO</name>
<gene>
    <name type="ordered locus">BQ2027_MB2322C</name>
</gene>
<organism>
    <name type="scientific">Mycobacterium bovis (strain ATCC BAA-935 / AF2122/97)</name>
    <dbReference type="NCBI Taxonomy" id="233413"/>
    <lineage>
        <taxon>Bacteria</taxon>
        <taxon>Bacillati</taxon>
        <taxon>Actinomycetota</taxon>
        <taxon>Actinomycetes</taxon>
        <taxon>Mycobacteriales</taxon>
        <taxon>Mycobacteriaceae</taxon>
        <taxon>Mycobacterium</taxon>
        <taxon>Mycobacterium tuberculosis complex</taxon>
    </lineage>
</organism>
<keyword id="KW-0378">Hydrolase</keyword>
<keyword id="KW-0479">Metal-binding</keyword>
<keyword id="KW-1185">Reference proteome</keyword>
<keyword id="KW-0862">Zinc</keyword>
<proteinExistence type="inferred from homology"/>
<reference key="1">
    <citation type="journal article" date="2003" name="Proc. Natl. Acad. Sci. U.S.A.">
        <title>The complete genome sequence of Mycobacterium bovis.</title>
        <authorList>
            <person name="Garnier T."/>
            <person name="Eiglmeier K."/>
            <person name="Camus J.-C."/>
            <person name="Medina N."/>
            <person name="Mansoor H."/>
            <person name="Pryor M."/>
            <person name="Duthoy S."/>
            <person name="Grondin S."/>
            <person name="Lacroix C."/>
            <person name="Monsempe C."/>
            <person name="Simon S."/>
            <person name="Harris B."/>
            <person name="Atkin R."/>
            <person name="Doggett J."/>
            <person name="Mayes R."/>
            <person name="Keating L."/>
            <person name="Wheeler P.R."/>
            <person name="Parkhill J."/>
            <person name="Barrell B.G."/>
            <person name="Cole S.T."/>
            <person name="Gordon S.V."/>
            <person name="Hewinson R.G."/>
        </authorList>
    </citation>
    <scope>NUCLEOTIDE SEQUENCE [LARGE SCALE GENOMIC DNA]</scope>
    <source>
        <strain>ATCC BAA-935 / AF2122/97</strain>
    </source>
</reference>
<reference key="2">
    <citation type="journal article" date="2017" name="Genome Announc.">
        <title>Updated reference genome sequence and annotation of Mycobacterium bovis AF2122/97.</title>
        <authorList>
            <person name="Malone K.M."/>
            <person name="Farrell D."/>
            <person name="Stuber T.P."/>
            <person name="Schubert O.T."/>
            <person name="Aebersold R."/>
            <person name="Robbe-Austerman S."/>
            <person name="Gordon S.V."/>
        </authorList>
    </citation>
    <scope>NUCLEOTIDE SEQUENCE [LARGE SCALE GENOMIC DNA]</scope>
    <scope>GENOME REANNOTATION</scope>
    <source>
        <strain>ATCC BAA-935 / AF2122/97</strain>
    </source>
</reference>
<evidence type="ECO:0000250" key="1"/>
<evidence type="ECO:0000256" key="2">
    <source>
        <dbReference type="SAM" id="MobiDB-lite"/>
    </source>
</evidence>
<evidence type="ECO:0000305" key="3"/>
<feature type="chain" id="PRO_0000104010" description="Probable metallo-hydrolase Mb2322c">
    <location>
        <begin position="1"/>
        <end position="310"/>
    </location>
</feature>
<feature type="region of interest" description="Disordered" evidence="2">
    <location>
        <begin position="1"/>
        <end position="29"/>
    </location>
</feature>
<feature type="binding site" evidence="1">
    <location>
        <position position="137"/>
    </location>
    <ligand>
        <name>Zn(2+)</name>
        <dbReference type="ChEBI" id="CHEBI:29105"/>
        <label>1</label>
    </ligand>
</feature>
<feature type="binding site" evidence="1">
    <location>
        <position position="139"/>
    </location>
    <ligand>
        <name>Zn(2+)</name>
        <dbReference type="ChEBI" id="CHEBI:29105"/>
        <label>1</label>
    </ligand>
</feature>
<feature type="binding site" evidence="1">
    <location>
        <position position="141"/>
    </location>
    <ligand>
        <name>Zn(2+)</name>
        <dbReference type="ChEBI" id="CHEBI:29105"/>
        <label>2</label>
    </ligand>
</feature>
<feature type="binding site" evidence="1">
    <location>
        <position position="142"/>
    </location>
    <ligand>
        <name>Zn(2+)</name>
        <dbReference type="ChEBI" id="CHEBI:29105"/>
        <label>2</label>
    </ligand>
</feature>
<feature type="binding site" evidence="1">
    <location>
        <position position="221"/>
    </location>
    <ligand>
        <name>Zn(2+)</name>
        <dbReference type="ChEBI" id="CHEBI:29105"/>
        <label>1</label>
    </ligand>
</feature>
<feature type="binding site" evidence="1">
    <location>
        <position position="242"/>
    </location>
    <ligand>
        <name>Zn(2+)</name>
        <dbReference type="ChEBI" id="CHEBI:29105"/>
        <label>1</label>
    </ligand>
</feature>
<feature type="binding site" evidence="1">
    <location>
        <position position="242"/>
    </location>
    <ligand>
        <name>Zn(2+)</name>
        <dbReference type="ChEBI" id="CHEBI:29105"/>
        <label>2</label>
    </ligand>
</feature>
<feature type="binding site" evidence="1">
    <location>
        <position position="288"/>
    </location>
    <ligand>
        <name>Zn(2+)</name>
        <dbReference type="ChEBI" id="CHEBI:29105"/>
        <label>2</label>
    </ligand>
</feature>